<sequence length="370" mass="41936">MESNSSQCEDETPSLLWGLDPVFLAFAKLYIRDILDLKESGQVQGVFFYNGHPIKQVDILGTVIGVREKDAFYSYGVDDSTGVINCICWKRLNNTKSSSATATPSARELSLTSQLKKLQETIAQRAKLEIGDIIRVRGHIRMFRGEREIHATTYYKVDDPVCNVQIARMLELPAIYRKVYDQPFHSPALKEDEALSNPGTLDLDSLTCLLSEKAKEFLVENRVQSFYQQELETVESLLSLANQPVIHSACSGQMGFKNDTTSRAIHSIFRNAVKLLQEEGLVFQKDGGFDNLFYVTREDKELHRKIHRIIQEECQKPNHVEKGCHFLHILACARLSLSPGLSEPVLQQVLQLLEDQSDIVSTTEKYYTAF</sequence>
<evidence type="ECO:0000250" key="1"/>
<evidence type="ECO:0000250" key="2">
    <source>
        <dbReference type="UniProtKB" id="Q9H668"/>
    </source>
</evidence>
<evidence type="ECO:0000305" key="3"/>
<proteinExistence type="evidence at transcript level"/>
<dbReference type="EMBL" id="BC123847">
    <property type="protein sequence ID" value="AAI23848.1"/>
    <property type="molecule type" value="mRNA"/>
</dbReference>
<dbReference type="RefSeq" id="NP_001070317.1">
    <property type="nucleotide sequence ID" value="NM_001076849.1"/>
</dbReference>
<dbReference type="RefSeq" id="XP_024841374.1">
    <property type="nucleotide sequence ID" value="XM_024985606.2"/>
</dbReference>
<dbReference type="SMR" id="Q08DB2"/>
<dbReference type="FunCoup" id="Q08DB2">
    <property type="interactions" value="887"/>
</dbReference>
<dbReference type="STRING" id="9913.ENSBTAP00000057271"/>
<dbReference type="PaxDb" id="9913-ENSBTAP00000019995"/>
<dbReference type="GeneID" id="514213"/>
<dbReference type="KEGG" id="bta:514213"/>
<dbReference type="CTD" id="79991"/>
<dbReference type="VEuPathDB" id="HostDB:ENSBTAG00000015019"/>
<dbReference type="eggNOG" id="KOG3108">
    <property type="taxonomic scope" value="Eukaryota"/>
</dbReference>
<dbReference type="HOGENOM" id="CLU_063889_0_0_1"/>
<dbReference type="InParanoid" id="Q08DB2"/>
<dbReference type="OMA" id="LCWKDEK"/>
<dbReference type="OrthoDB" id="77828at2759"/>
<dbReference type="TreeFam" id="TF328623"/>
<dbReference type="Reactome" id="R-BTA-174411">
    <property type="pathway name" value="Polymerase switching on the C-strand of the telomere"/>
</dbReference>
<dbReference type="Reactome" id="R-BTA-174430">
    <property type="pathway name" value="Telomere C-strand synthesis initiation"/>
</dbReference>
<dbReference type="Proteomes" id="UP000009136">
    <property type="component" value="Chromosome 26"/>
</dbReference>
<dbReference type="Bgee" id="ENSBTAG00000015019">
    <property type="expression patterns" value="Expressed in cortex of kidney and 106 other cell types or tissues"/>
</dbReference>
<dbReference type="GO" id="GO:0000781">
    <property type="term" value="C:chromosome, telomeric region"/>
    <property type="evidence" value="ECO:0000250"/>
    <property type="project" value="UniProtKB"/>
</dbReference>
<dbReference type="GO" id="GO:1990879">
    <property type="term" value="C:CST complex"/>
    <property type="evidence" value="ECO:0000318"/>
    <property type="project" value="GO_Central"/>
</dbReference>
<dbReference type="GO" id="GO:0005634">
    <property type="term" value="C:nucleus"/>
    <property type="evidence" value="ECO:0000250"/>
    <property type="project" value="UniProtKB"/>
</dbReference>
<dbReference type="GO" id="GO:0043047">
    <property type="term" value="F:single-stranded telomeric DNA binding"/>
    <property type="evidence" value="ECO:0000250"/>
    <property type="project" value="UniProtKB"/>
</dbReference>
<dbReference type="GO" id="GO:0042162">
    <property type="term" value="F:telomeric DNA binding"/>
    <property type="evidence" value="ECO:0000318"/>
    <property type="project" value="GO_Central"/>
</dbReference>
<dbReference type="GO" id="GO:0016233">
    <property type="term" value="P:telomere capping"/>
    <property type="evidence" value="ECO:0007669"/>
    <property type="project" value="InterPro"/>
</dbReference>
<dbReference type="GO" id="GO:0000723">
    <property type="term" value="P:telomere maintenance"/>
    <property type="evidence" value="ECO:0000250"/>
    <property type="project" value="UniProtKB"/>
</dbReference>
<dbReference type="GO" id="GO:0010833">
    <property type="term" value="P:telomere maintenance via telomere lengthening"/>
    <property type="evidence" value="ECO:0000250"/>
    <property type="project" value="UniProtKB"/>
</dbReference>
<dbReference type="CDD" id="cd04483">
    <property type="entry name" value="hOBFC1_like"/>
    <property type="match status" value="1"/>
</dbReference>
<dbReference type="FunFam" id="1.10.10.10:FF:000275">
    <property type="entry name" value="CST complex subunit STN1"/>
    <property type="match status" value="1"/>
</dbReference>
<dbReference type="FunFam" id="1.10.10.980:FF:000001">
    <property type="entry name" value="CST complex subunit STN1"/>
    <property type="match status" value="1"/>
</dbReference>
<dbReference type="FunFam" id="2.40.50.140:FF:000181">
    <property type="entry name" value="CST complex subunit STN1"/>
    <property type="match status" value="1"/>
</dbReference>
<dbReference type="Gene3D" id="1.10.10.980">
    <property type="entry name" value="CST, Suppressor of Cdc13 homolog, complex subunit STN1, N-terminal domain"/>
    <property type="match status" value="1"/>
</dbReference>
<dbReference type="Gene3D" id="2.40.50.140">
    <property type="entry name" value="Nucleic acid-binding proteins"/>
    <property type="match status" value="1"/>
</dbReference>
<dbReference type="Gene3D" id="1.10.10.10">
    <property type="entry name" value="Winged helix-like DNA-binding domain superfamily/Winged helix DNA-binding domain"/>
    <property type="match status" value="1"/>
</dbReference>
<dbReference type="InterPro" id="IPR015253">
    <property type="entry name" value="CST_STN1_C"/>
</dbReference>
<dbReference type="InterPro" id="IPR042082">
    <property type="entry name" value="CST_Stn1_wHTH1_sf"/>
</dbReference>
<dbReference type="InterPro" id="IPR012340">
    <property type="entry name" value="NA-bd_OB-fold"/>
</dbReference>
<dbReference type="InterPro" id="IPR040260">
    <property type="entry name" value="RFA2-like"/>
</dbReference>
<dbReference type="InterPro" id="IPR014647">
    <property type="entry name" value="Stn1"/>
</dbReference>
<dbReference type="InterPro" id="IPR018856">
    <property type="entry name" value="Stn1_N"/>
</dbReference>
<dbReference type="InterPro" id="IPR036388">
    <property type="entry name" value="WH-like_DNA-bd_sf"/>
</dbReference>
<dbReference type="InterPro" id="IPR036390">
    <property type="entry name" value="WH_DNA-bd_sf"/>
</dbReference>
<dbReference type="PANTHER" id="PTHR13989:SF33">
    <property type="entry name" value="CST COMPLEX SUBUNIT STN1"/>
    <property type="match status" value="1"/>
</dbReference>
<dbReference type="PANTHER" id="PTHR13989">
    <property type="entry name" value="REPLICATION PROTEIN A-RELATED"/>
    <property type="match status" value="1"/>
</dbReference>
<dbReference type="Pfam" id="PF10451">
    <property type="entry name" value="Stn1"/>
    <property type="match status" value="1"/>
</dbReference>
<dbReference type="Pfam" id="PF09170">
    <property type="entry name" value="STN1_2"/>
    <property type="match status" value="1"/>
</dbReference>
<dbReference type="PIRSF" id="PIRSF036950">
    <property type="entry name" value="UCP036950"/>
    <property type="match status" value="1"/>
</dbReference>
<dbReference type="SUPFAM" id="SSF50249">
    <property type="entry name" value="Nucleic acid-binding proteins"/>
    <property type="match status" value="1"/>
</dbReference>
<dbReference type="SUPFAM" id="SSF46785">
    <property type="entry name" value="Winged helix' DNA-binding domain"/>
    <property type="match status" value="1"/>
</dbReference>
<accession>Q08DB2</accession>
<comment type="function">
    <text evidence="2">Component of the CST complex proposed to act as a specialized replication factor promoting DNA replication under conditions of replication stress or natural replication barriers such as the telomere duplex. The CST complex binds single-stranded DNA with high affinity in a sequence-independent manner, while isolated subunits bind DNA with low affinity by themselves. Initially the CST complex has been proposed to protect telomeres from DNA degradation. However, the CST complex has been shown to be involved in several aspects of telomere replication. The CST complex inhibits telomerase and is involved in telomere length homeostasis; it is proposed to bind to newly telomerase-synthesized 3' overhangs and to terminate telomerase action implicating the association with the ACD:POT1 complex thus interfering with its telomerase stimulation activity. The CST complex is also proposed to be involved in fill-in synthesis of the telomeric C-strand probably implicating recruitment and activation of DNA polymerase alpha. The CST complex facilitates recovery from many forms of exogenous DNA damage; seems to be involved in the re-initiation of DNA replication at repaired forks and/or dormant origins. Required for efficicient replication of the duplex region of the telomere. Promotes efficient replication of lagging-strand telomeres. Promotes general replication start following replication-fork stalling implicating new origin firing. May be in involved in C-strand fill-in during late S/G2 phase independent of its role in telomere duplex replication (By similarity).</text>
</comment>
<comment type="subunit">
    <text evidence="2">Component of the CST complex, composed of TEN1/C17orf106, CTC1/C17orf68 and STN1; in the complex interacts directly with TEN1 and CTC1. Interacts with ACD/TPP1, POT1 and POLA1.</text>
</comment>
<comment type="subcellular location">
    <subcellularLocation>
        <location evidence="2">Nucleus</location>
    </subcellularLocation>
    <subcellularLocation>
        <location evidence="2">Chromosome</location>
        <location evidence="2">Telomere</location>
    </subcellularLocation>
</comment>
<comment type="similarity">
    <text evidence="3">Belongs to the STN1 family.</text>
</comment>
<organism>
    <name type="scientific">Bos taurus</name>
    <name type="common">Bovine</name>
    <dbReference type="NCBI Taxonomy" id="9913"/>
    <lineage>
        <taxon>Eukaryota</taxon>
        <taxon>Metazoa</taxon>
        <taxon>Chordata</taxon>
        <taxon>Craniata</taxon>
        <taxon>Vertebrata</taxon>
        <taxon>Euteleostomi</taxon>
        <taxon>Mammalia</taxon>
        <taxon>Eutheria</taxon>
        <taxon>Laurasiatheria</taxon>
        <taxon>Artiodactyla</taxon>
        <taxon>Ruminantia</taxon>
        <taxon>Pecora</taxon>
        <taxon>Bovidae</taxon>
        <taxon>Bovinae</taxon>
        <taxon>Bos</taxon>
    </lineage>
</organism>
<gene>
    <name evidence="2" type="primary">STN1</name>
    <name type="synonym">OBFC1</name>
</gene>
<name>STN1_BOVIN</name>
<reference key="1">
    <citation type="submission" date="2006-09" db="EMBL/GenBank/DDBJ databases">
        <authorList>
            <consortium name="NIH - Mammalian Gene Collection (MGC) project"/>
        </authorList>
    </citation>
    <scope>NUCLEOTIDE SEQUENCE [LARGE SCALE MRNA]</scope>
    <source>
        <strain>Hereford</strain>
        <tissue>Fetal skin</tissue>
    </source>
</reference>
<feature type="chain" id="PRO_0000392987" description="CST complex subunit STN1">
    <location>
        <begin position="1"/>
        <end position="370"/>
    </location>
</feature>
<feature type="DNA-binding region" description="OB">
    <location>
        <begin position="57"/>
        <end position="157"/>
    </location>
</feature>
<feature type="region of interest" description="Interaction with CTC1" evidence="2">
    <location>
        <begin position="1"/>
        <end position="187"/>
    </location>
</feature>
<feature type="region of interest" description="Winged helix-turn-helix (wHTH) 1" evidence="1">
    <location>
        <begin position="193"/>
        <end position="297"/>
    </location>
</feature>
<feature type="region of interest" description="Winged helix-turn-helix (wHTH) 2" evidence="1">
    <location>
        <begin position="298"/>
        <end position="370"/>
    </location>
</feature>
<protein>
    <recommendedName>
        <fullName evidence="2">CST complex subunit STN1</fullName>
    </recommendedName>
    <alternativeName>
        <fullName>Oligonucleotide/oligosaccharide-binding fold-containing protein 1</fullName>
    </alternativeName>
    <alternativeName>
        <fullName>Suppressor of cdc thirteen homolog</fullName>
    </alternativeName>
</protein>
<keyword id="KW-0158">Chromosome</keyword>
<keyword id="KW-0238">DNA-binding</keyword>
<keyword id="KW-0539">Nucleus</keyword>
<keyword id="KW-1185">Reference proteome</keyword>
<keyword id="KW-0779">Telomere</keyword>